<protein>
    <recommendedName>
        <fullName evidence="1">DNA protection during starvation protein</fullName>
        <ecNumber evidence="1">1.16.-.-</ecNumber>
    </recommendedName>
</protein>
<reference key="1">
    <citation type="journal article" date="2011" name="J. Bacteriol.">
        <title>Comparative genomics of 28 Salmonella enterica isolates: evidence for CRISPR-mediated adaptive sublineage evolution.</title>
        <authorList>
            <person name="Fricke W.F."/>
            <person name="Mammel M.K."/>
            <person name="McDermott P.F."/>
            <person name="Tartera C."/>
            <person name="White D.G."/>
            <person name="Leclerc J.E."/>
            <person name="Ravel J."/>
            <person name="Cebula T.A."/>
        </authorList>
    </citation>
    <scope>NUCLEOTIDE SEQUENCE [LARGE SCALE GENOMIC DNA]</scope>
    <source>
        <strain>CVM19633</strain>
    </source>
</reference>
<proteinExistence type="inferred from homology"/>
<gene>
    <name evidence="1" type="primary">dps</name>
    <name type="ordered locus">SeSA_A0980</name>
</gene>
<feature type="chain" id="PRO_1000145916" description="DNA protection during starvation protein">
    <location>
        <begin position="1"/>
        <end position="167"/>
    </location>
</feature>
<feature type="binding site" evidence="1">
    <location>
        <position position="51"/>
    </location>
    <ligand>
        <name>Fe cation</name>
        <dbReference type="ChEBI" id="CHEBI:24875"/>
    </ligand>
</feature>
<feature type="binding site" evidence="1">
    <location>
        <position position="78"/>
    </location>
    <ligand>
        <name>Fe cation</name>
        <dbReference type="ChEBI" id="CHEBI:24875"/>
    </ligand>
</feature>
<feature type="binding site" evidence="1">
    <location>
        <position position="82"/>
    </location>
    <ligand>
        <name>Fe cation</name>
        <dbReference type="ChEBI" id="CHEBI:24875"/>
    </ligand>
</feature>
<comment type="function">
    <text evidence="1">During stationary phase, binds the chromosome non-specifically, forming a highly ordered and stable dps-DNA co-crystal within which chromosomal DNA is condensed and protected from diverse damages. It protects DNA from oxidative damage by sequestering intracellular Fe(2+) ion and storing it in the form of Fe(3+) oxyhydroxide mineral, which can be released after reduction. One hydrogen peroxide oxidizes two Fe(2+) ions, which prevents hydroxyl radical production by the Fenton reaction.</text>
</comment>
<comment type="catalytic activity">
    <reaction evidence="1">
        <text>2 Fe(2+) + H2O2 + 2 H(+) = 2 Fe(3+) + 2 H2O</text>
        <dbReference type="Rhea" id="RHEA:48712"/>
        <dbReference type="ChEBI" id="CHEBI:15377"/>
        <dbReference type="ChEBI" id="CHEBI:15378"/>
        <dbReference type="ChEBI" id="CHEBI:16240"/>
        <dbReference type="ChEBI" id="CHEBI:29033"/>
        <dbReference type="ChEBI" id="CHEBI:29034"/>
    </reaction>
</comment>
<comment type="subunit">
    <text evidence="1">Homododecamer. The 12 subunits form a hollow sphere into which the mineral iron core of up to 500 Fe(3+) can be deposited.</text>
</comment>
<comment type="subcellular location">
    <subcellularLocation>
        <location evidence="1">Cytoplasm</location>
    </subcellularLocation>
</comment>
<comment type="similarity">
    <text evidence="1">Belongs to the Dps family.</text>
</comment>
<sequence length="167" mass="18717">MSTAKLVKTKASNLLYTRNDVSESDKKATVELLNRQVIQFIDLSLITKQAHWNMRGANFIAVHEMLDGFRTALTDHLDTMAERAVQLGGVALGTTQVINSKTPLKSYPLDIHNVQDHLKELADRYAVVANDVRKAIGEAKDEDTADIFTAASRDLDKFLWFIESNIE</sequence>
<evidence type="ECO:0000255" key="1">
    <source>
        <dbReference type="HAMAP-Rule" id="MF_01441"/>
    </source>
</evidence>
<keyword id="KW-0963">Cytoplasm</keyword>
<keyword id="KW-0226">DNA condensation</keyword>
<keyword id="KW-0238">DNA-binding</keyword>
<keyword id="KW-0408">Iron</keyword>
<keyword id="KW-0409">Iron storage</keyword>
<keyword id="KW-0479">Metal-binding</keyword>
<keyword id="KW-0560">Oxidoreductase</keyword>
<name>DPS_SALSV</name>
<dbReference type="EC" id="1.16.-.-" evidence="1"/>
<dbReference type="EMBL" id="CP001127">
    <property type="protein sequence ID" value="ACF92513.1"/>
    <property type="molecule type" value="Genomic_DNA"/>
</dbReference>
<dbReference type="RefSeq" id="WP_000100805.1">
    <property type="nucleotide sequence ID" value="NC_011094.1"/>
</dbReference>
<dbReference type="SMR" id="B4TQX5"/>
<dbReference type="KEGG" id="sew:SeSA_A0980"/>
<dbReference type="HOGENOM" id="CLU_098183_1_2_6"/>
<dbReference type="Proteomes" id="UP000001865">
    <property type="component" value="Chromosome"/>
</dbReference>
<dbReference type="GO" id="GO:0005737">
    <property type="term" value="C:cytoplasm"/>
    <property type="evidence" value="ECO:0007669"/>
    <property type="project" value="UniProtKB-SubCell"/>
</dbReference>
<dbReference type="GO" id="GO:0003677">
    <property type="term" value="F:DNA binding"/>
    <property type="evidence" value="ECO:0007669"/>
    <property type="project" value="UniProtKB-UniRule"/>
</dbReference>
<dbReference type="GO" id="GO:0008199">
    <property type="term" value="F:ferric iron binding"/>
    <property type="evidence" value="ECO:0007669"/>
    <property type="project" value="UniProtKB-UniRule"/>
</dbReference>
<dbReference type="GO" id="GO:0016722">
    <property type="term" value="F:oxidoreductase activity, acting on metal ions"/>
    <property type="evidence" value="ECO:0007669"/>
    <property type="project" value="InterPro"/>
</dbReference>
<dbReference type="GO" id="GO:0030261">
    <property type="term" value="P:chromosome condensation"/>
    <property type="evidence" value="ECO:0007669"/>
    <property type="project" value="UniProtKB-KW"/>
</dbReference>
<dbReference type="GO" id="GO:0006879">
    <property type="term" value="P:intracellular iron ion homeostasis"/>
    <property type="evidence" value="ECO:0007669"/>
    <property type="project" value="UniProtKB-KW"/>
</dbReference>
<dbReference type="CDD" id="cd01043">
    <property type="entry name" value="DPS"/>
    <property type="match status" value="1"/>
</dbReference>
<dbReference type="FunFam" id="1.20.1260.10:FF:000003">
    <property type="entry name" value="DNA protection during starvation protein"/>
    <property type="match status" value="1"/>
</dbReference>
<dbReference type="Gene3D" id="1.20.1260.10">
    <property type="match status" value="1"/>
</dbReference>
<dbReference type="HAMAP" id="MF_01441">
    <property type="entry name" value="Dps"/>
    <property type="match status" value="1"/>
</dbReference>
<dbReference type="InterPro" id="IPR002177">
    <property type="entry name" value="DPS_DNA-bd"/>
</dbReference>
<dbReference type="InterPro" id="IPR023188">
    <property type="entry name" value="DPS_DNA-bd_CS"/>
</dbReference>
<dbReference type="InterPro" id="IPR023067">
    <property type="entry name" value="Dps_gammaproteobac"/>
</dbReference>
<dbReference type="InterPro" id="IPR012347">
    <property type="entry name" value="Ferritin-like"/>
</dbReference>
<dbReference type="InterPro" id="IPR009078">
    <property type="entry name" value="Ferritin-like_SF"/>
</dbReference>
<dbReference type="InterPro" id="IPR008331">
    <property type="entry name" value="Ferritin_DPS_dom"/>
</dbReference>
<dbReference type="NCBIfam" id="NF006975">
    <property type="entry name" value="PRK09448.1"/>
    <property type="match status" value="1"/>
</dbReference>
<dbReference type="PANTHER" id="PTHR42932:SF3">
    <property type="entry name" value="DNA PROTECTION DURING STARVATION PROTEIN"/>
    <property type="match status" value="1"/>
</dbReference>
<dbReference type="PANTHER" id="PTHR42932">
    <property type="entry name" value="GENERAL STRESS PROTEIN 20U"/>
    <property type="match status" value="1"/>
</dbReference>
<dbReference type="Pfam" id="PF00210">
    <property type="entry name" value="Ferritin"/>
    <property type="match status" value="1"/>
</dbReference>
<dbReference type="PIRSF" id="PIRSF005900">
    <property type="entry name" value="Dps"/>
    <property type="match status" value="1"/>
</dbReference>
<dbReference type="PRINTS" id="PR01346">
    <property type="entry name" value="HELNAPAPROT"/>
</dbReference>
<dbReference type="SUPFAM" id="SSF47240">
    <property type="entry name" value="Ferritin-like"/>
    <property type="match status" value="1"/>
</dbReference>
<dbReference type="PROSITE" id="PS00818">
    <property type="entry name" value="DPS_1"/>
    <property type="match status" value="1"/>
</dbReference>
<dbReference type="PROSITE" id="PS00819">
    <property type="entry name" value="DPS_2"/>
    <property type="match status" value="1"/>
</dbReference>
<accession>B4TQX5</accession>
<organism>
    <name type="scientific">Salmonella schwarzengrund (strain CVM19633)</name>
    <dbReference type="NCBI Taxonomy" id="439843"/>
    <lineage>
        <taxon>Bacteria</taxon>
        <taxon>Pseudomonadati</taxon>
        <taxon>Pseudomonadota</taxon>
        <taxon>Gammaproteobacteria</taxon>
        <taxon>Enterobacterales</taxon>
        <taxon>Enterobacteriaceae</taxon>
        <taxon>Salmonella</taxon>
    </lineage>
</organism>